<accession>P64712</accession>
<accession>A0A1R3XWJ2</accession>
<accession>Q11154</accession>
<accession>X2BF53</accession>
<organism>
    <name type="scientific">Mycobacterium bovis (strain ATCC BAA-935 / AF2122/97)</name>
    <dbReference type="NCBI Taxonomy" id="233413"/>
    <lineage>
        <taxon>Bacteria</taxon>
        <taxon>Bacillati</taxon>
        <taxon>Actinomycetota</taxon>
        <taxon>Actinomycetes</taxon>
        <taxon>Mycobacteriales</taxon>
        <taxon>Mycobacteriaceae</taxon>
        <taxon>Mycobacterium</taxon>
        <taxon>Mycobacterium tuberculosis complex</taxon>
    </lineage>
</organism>
<gene>
    <name type="ordered locus">BQ2027_MB0498</name>
</gene>
<reference key="1">
    <citation type="journal article" date="2003" name="Proc. Natl. Acad. Sci. U.S.A.">
        <title>The complete genome sequence of Mycobacterium bovis.</title>
        <authorList>
            <person name="Garnier T."/>
            <person name="Eiglmeier K."/>
            <person name="Camus J.-C."/>
            <person name="Medina N."/>
            <person name="Mansoor H."/>
            <person name="Pryor M."/>
            <person name="Duthoy S."/>
            <person name="Grondin S."/>
            <person name="Lacroix C."/>
            <person name="Monsempe C."/>
            <person name="Simon S."/>
            <person name="Harris B."/>
            <person name="Atkin R."/>
            <person name="Doggett J."/>
            <person name="Mayes R."/>
            <person name="Keating L."/>
            <person name="Wheeler P.R."/>
            <person name="Parkhill J."/>
            <person name="Barrell B.G."/>
            <person name="Cole S.T."/>
            <person name="Gordon S.V."/>
            <person name="Hewinson R.G."/>
        </authorList>
    </citation>
    <scope>NUCLEOTIDE SEQUENCE [LARGE SCALE GENOMIC DNA]</scope>
    <source>
        <strain>ATCC BAA-935 / AF2122/97</strain>
    </source>
</reference>
<reference key="2">
    <citation type="journal article" date="2017" name="Genome Announc.">
        <title>Updated reference genome sequence and annotation of Mycobacterium bovis AF2122/97.</title>
        <authorList>
            <person name="Malone K.M."/>
            <person name="Farrell D."/>
            <person name="Stuber T.P."/>
            <person name="Schubert O.T."/>
            <person name="Aebersold R."/>
            <person name="Robbe-Austerman S."/>
            <person name="Gordon S.V."/>
        </authorList>
    </citation>
    <scope>NUCLEOTIDE SEQUENCE [LARGE SCALE GENOMIC DNA]</scope>
    <scope>GENOME REANNOTATION</scope>
    <source>
        <strain>ATCC BAA-935 / AF2122/97</strain>
    </source>
</reference>
<sequence length="201" mass="20951">MMTLKVAIGPQNAFVLRQGIRREYVLVIVALCGIADGALIAAGVGGFAALIHAHPNMTLVARFGGAAFLIGYALLAARNAWRPSGLVPSESGPAALIGVVQMCLVVTFLNPHVYLDTVVLIGALANEESDLRWFFGAGAWAASVVWFAVLGFSAGRLQPFFATPAAWRILDALVAVTMIGVAVVVLVTSPSVPTANVALII</sequence>
<dbReference type="EMBL" id="LT708304">
    <property type="protein sequence ID" value="SIT99093.1"/>
    <property type="molecule type" value="Genomic_DNA"/>
</dbReference>
<dbReference type="RefSeq" id="NP_854161.1">
    <property type="nucleotide sequence ID" value="NC_002945.3"/>
</dbReference>
<dbReference type="PATRIC" id="fig|233413.5.peg.541"/>
<dbReference type="Proteomes" id="UP000001419">
    <property type="component" value="Chromosome"/>
</dbReference>
<dbReference type="GO" id="GO:0005886">
    <property type="term" value="C:plasma membrane"/>
    <property type="evidence" value="ECO:0007669"/>
    <property type="project" value="UniProtKB-SubCell"/>
</dbReference>
<dbReference type="GO" id="GO:0015171">
    <property type="term" value="F:amino acid transmembrane transporter activity"/>
    <property type="evidence" value="ECO:0007669"/>
    <property type="project" value="TreeGrafter"/>
</dbReference>
<dbReference type="InterPro" id="IPR001123">
    <property type="entry name" value="LeuE-type"/>
</dbReference>
<dbReference type="InterPro" id="IPR004777">
    <property type="entry name" value="Lys/arg_exporter"/>
</dbReference>
<dbReference type="NCBIfam" id="TIGR00948">
    <property type="entry name" value="2a75"/>
    <property type="match status" value="1"/>
</dbReference>
<dbReference type="PANTHER" id="PTHR30086">
    <property type="entry name" value="ARGININE EXPORTER PROTEIN ARGO"/>
    <property type="match status" value="1"/>
</dbReference>
<dbReference type="PANTHER" id="PTHR30086:SF20">
    <property type="entry name" value="ARGININE EXPORTER PROTEIN ARGO-RELATED"/>
    <property type="match status" value="1"/>
</dbReference>
<dbReference type="Pfam" id="PF01810">
    <property type="entry name" value="LysE"/>
    <property type="match status" value="1"/>
</dbReference>
<protein>
    <recommendedName>
        <fullName>Putative amino-acid transporter Mb0498</fullName>
    </recommendedName>
</protein>
<evidence type="ECO:0000255" key="1"/>
<evidence type="ECO:0000305" key="2"/>
<feature type="chain" id="PRO_0000103693" description="Putative amino-acid transporter Mb0498">
    <location>
        <begin position="1"/>
        <end position="201"/>
    </location>
</feature>
<feature type="transmembrane region" description="Helical" evidence="1">
    <location>
        <begin position="25"/>
        <end position="45"/>
    </location>
</feature>
<feature type="transmembrane region" description="Helical" evidence="1">
    <location>
        <begin position="57"/>
        <end position="77"/>
    </location>
</feature>
<feature type="transmembrane region" description="Helical" evidence="1">
    <location>
        <begin position="104"/>
        <end position="124"/>
    </location>
</feature>
<feature type="transmembrane region" description="Helical" evidence="1">
    <location>
        <begin position="133"/>
        <end position="153"/>
    </location>
</feature>
<feature type="transmembrane region" description="Helical" evidence="1">
    <location>
        <begin position="169"/>
        <end position="189"/>
    </location>
</feature>
<keyword id="KW-0029">Amino-acid transport</keyword>
<keyword id="KW-1003">Cell membrane</keyword>
<keyword id="KW-0472">Membrane</keyword>
<keyword id="KW-1185">Reference proteome</keyword>
<keyword id="KW-0812">Transmembrane</keyword>
<keyword id="KW-1133">Transmembrane helix</keyword>
<keyword id="KW-0813">Transport</keyword>
<comment type="subcellular location">
    <subcellularLocation>
        <location evidence="2">Cell membrane</location>
        <topology evidence="2">Multi-pass membrane protein</topology>
    </subcellularLocation>
</comment>
<comment type="similarity">
    <text evidence="2">Belongs to the LysE/ArgO transporter (TC 2.A.75) family.</text>
</comment>
<name>Y498_MYCBO</name>
<proteinExistence type="inferred from homology"/>